<proteinExistence type="inferred from homology"/>
<gene>
    <name evidence="1" type="primary">obg</name>
    <name type="ordered locus">Mpop_4918</name>
</gene>
<reference key="1">
    <citation type="submission" date="2008-04" db="EMBL/GenBank/DDBJ databases">
        <title>Complete sequence of chromosome of Methylobacterium populi BJ001.</title>
        <authorList>
            <consortium name="US DOE Joint Genome Institute"/>
            <person name="Copeland A."/>
            <person name="Lucas S."/>
            <person name="Lapidus A."/>
            <person name="Glavina del Rio T."/>
            <person name="Dalin E."/>
            <person name="Tice H."/>
            <person name="Bruce D."/>
            <person name="Goodwin L."/>
            <person name="Pitluck S."/>
            <person name="Chertkov O."/>
            <person name="Brettin T."/>
            <person name="Detter J.C."/>
            <person name="Han C."/>
            <person name="Kuske C.R."/>
            <person name="Schmutz J."/>
            <person name="Larimer F."/>
            <person name="Land M."/>
            <person name="Hauser L."/>
            <person name="Kyrpides N."/>
            <person name="Mikhailova N."/>
            <person name="Marx C."/>
            <person name="Richardson P."/>
        </authorList>
    </citation>
    <scope>NUCLEOTIDE SEQUENCE [LARGE SCALE GENOMIC DNA]</scope>
    <source>
        <strain>ATCC BAA-705 / NCIMB 13946 / BJ001</strain>
    </source>
</reference>
<feature type="chain" id="PRO_0000386042" description="GTPase Obg">
    <location>
        <begin position="1"/>
        <end position="344"/>
    </location>
</feature>
<feature type="domain" description="Obg" evidence="2">
    <location>
        <begin position="1"/>
        <end position="159"/>
    </location>
</feature>
<feature type="domain" description="OBG-type G" evidence="1">
    <location>
        <begin position="160"/>
        <end position="327"/>
    </location>
</feature>
<feature type="binding site" evidence="1">
    <location>
        <begin position="166"/>
        <end position="173"/>
    </location>
    <ligand>
        <name>GTP</name>
        <dbReference type="ChEBI" id="CHEBI:37565"/>
    </ligand>
</feature>
<feature type="binding site" evidence="1">
    <location>
        <position position="173"/>
    </location>
    <ligand>
        <name>Mg(2+)</name>
        <dbReference type="ChEBI" id="CHEBI:18420"/>
    </ligand>
</feature>
<feature type="binding site" evidence="1">
    <location>
        <begin position="191"/>
        <end position="195"/>
    </location>
    <ligand>
        <name>GTP</name>
        <dbReference type="ChEBI" id="CHEBI:37565"/>
    </ligand>
</feature>
<feature type="binding site" evidence="1">
    <location>
        <position position="193"/>
    </location>
    <ligand>
        <name>Mg(2+)</name>
        <dbReference type="ChEBI" id="CHEBI:18420"/>
    </ligand>
</feature>
<feature type="binding site" evidence="1">
    <location>
        <begin position="212"/>
        <end position="215"/>
    </location>
    <ligand>
        <name>GTP</name>
        <dbReference type="ChEBI" id="CHEBI:37565"/>
    </ligand>
</feature>
<feature type="binding site" evidence="1">
    <location>
        <begin position="279"/>
        <end position="282"/>
    </location>
    <ligand>
        <name>GTP</name>
        <dbReference type="ChEBI" id="CHEBI:37565"/>
    </ligand>
</feature>
<feature type="binding site" evidence="1">
    <location>
        <begin position="308"/>
        <end position="310"/>
    </location>
    <ligand>
        <name>GTP</name>
        <dbReference type="ChEBI" id="CHEBI:37565"/>
    </ligand>
</feature>
<dbReference type="EC" id="3.6.5.-" evidence="1"/>
<dbReference type="EMBL" id="CP001029">
    <property type="protein sequence ID" value="ACB83014.1"/>
    <property type="molecule type" value="Genomic_DNA"/>
</dbReference>
<dbReference type="RefSeq" id="WP_012456612.1">
    <property type="nucleotide sequence ID" value="NC_010725.1"/>
</dbReference>
<dbReference type="SMR" id="B1ZL15"/>
<dbReference type="STRING" id="441620.Mpop_4918"/>
<dbReference type="KEGG" id="mpo:Mpop_4918"/>
<dbReference type="eggNOG" id="COG0536">
    <property type="taxonomic scope" value="Bacteria"/>
</dbReference>
<dbReference type="HOGENOM" id="CLU_011747_2_0_5"/>
<dbReference type="OrthoDB" id="9807318at2"/>
<dbReference type="Proteomes" id="UP000007136">
    <property type="component" value="Chromosome"/>
</dbReference>
<dbReference type="GO" id="GO:0005737">
    <property type="term" value="C:cytoplasm"/>
    <property type="evidence" value="ECO:0007669"/>
    <property type="project" value="UniProtKB-SubCell"/>
</dbReference>
<dbReference type="GO" id="GO:0005525">
    <property type="term" value="F:GTP binding"/>
    <property type="evidence" value="ECO:0007669"/>
    <property type="project" value="UniProtKB-UniRule"/>
</dbReference>
<dbReference type="GO" id="GO:0003924">
    <property type="term" value="F:GTPase activity"/>
    <property type="evidence" value="ECO:0007669"/>
    <property type="project" value="UniProtKB-UniRule"/>
</dbReference>
<dbReference type="GO" id="GO:0000287">
    <property type="term" value="F:magnesium ion binding"/>
    <property type="evidence" value="ECO:0007669"/>
    <property type="project" value="InterPro"/>
</dbReference>
<dbReference type="GO" id="GO:0042254">
    <property type="term" value="P:ribosome biogenesis"/>
    <property type="evidence" value="ECO:0007669"/>
    <property type="project" value="UniProtKB-UniRule"/>
</dbReference>
<dbReference type="CDD" id="cd01898">
    <property type="entry name" value="Obg"/>
    <property type="match status" value="1"/>
</dbReference>
<dbReference type="FunFam" id="2.70.210.12:FF:000001">
    <property type="entry name" value="GTPase Obg"/>
    <property type="match status" value="1"/>
</dbReference>
<dbReference type="Gene3D" id="2.70.210.12">
    <property type="entry name" value="GTP1/OBG domain"/>
    <property type="match status" value="1"/>
</dbReference>
<dbReference type="Gene3D" id="3.40.50.300">
    <property type="entry name" value="P-loop containing nucleotide triphosphate hydrolases"/>
    <property type="match status" value="1"/>
</dbReference>
<dbReference type="HAMAP" id="MF_01454">
    <property type="entry name" value="GTPase_Obg"/>
    <property type="match status" value="1"/>
</dbReference>
<dbReference type="InterPro" id="IPR031167">
    <property type="entry name" value="G_OBG"/>
</dbReference>
<dbReference type="InterPro" id="IPR006073">
    <property type="entry name" value="GTP-bd"/>
</dbReference>
<dbReference type="InterPro" id="IPR014100">
    <property type="entry name" value="GTP-bd_Obg/CgtA"/>
</dbReference>
<dbReference type="InterPro" id="IPR006074">
    <property type="entry name" value="GTP1-OBG_CS"/>
</dbReference>
<dbReference type="InterPro" id="IPR006169">
    <property type="entry name" value="GTP1_OBG_dom"/>
</dbReference>
<dbReference type="InterPro" id="IPR036726">
    <property type="entry name" value="GTP1_OBG_dom_sf"/>
</dbReference>
<dbReference type="InterPro" id="IPR045086">
    <property type="entry name" value="OBG_GTPase"/>
</dbReference>
<dbReference type="InterPro" id="IPR027417">
    <property type="entry name" value="P-loop_NTPase"/>
</dbReference>
<dbReference type="NCBIfam" id="TIGR02729">
    <property type="entry name" value="Obg_CgtA"/>
    <property type="match status" value="1"/>
</dbReference>
<dbReference type="NCBIfam" id="NF008955">
    <property type="entry name" value="PRK12297.1"/>
    <property type="match status" value="1"/>
</dbReference>
<dbReference type="NCBIfam" id="NF008956">
    <property type="entry name" value="PRK12299.1"/>
    <property type="match status" value="1"/>
</dbReference>
<dbReference type="PANTHER" id="PTHR11702">
    <property type="entry name" value="DEVELOPMENTALLY REGULATED GTP-BINDING PROTEIN-RELATED"/>
    <property type="match status" value="1"/>
</dbReference>
<dbReference type="PANTHER" id="PTHR11702:SF31">
    <property type="entry name" value="MITOCHONDRIAL RIBOSOME-ASSOCIATED GTPASE 2"/>
    <property type="match status" value="1"/>
</dbReference>
<dbReference type="Pfam" id="PF01018">
    <property type="entry name" value="GTP1_OBG"/>
    <property type="match status" value="1"/>
</dbReference>
<dbReference type="Pfam" id="PF01926">
    <property type="entry name" value="MMR_HSR1"/>
    <property type="match status" value="1"/>
</dbReference>
<dbReference type="PIRSF" id="PIRSF002401">
    <property type="entry name" value="GTP_bd_Obg/CgtA"/>
    <property type="match status" value="1"/>
</dbReference>
<dbReference type="PRINTS" id="PR00326">
    <property type="entry name" value="GTP1OBG"/>
</dbReference>
<dbReference type="SUPFAM" id="SSF82051">
    <property type="entry name" value="Obg GTP-binding protein N-terminal domain"/>
    <property type="match status" value="1"/>
</dbReference>
<dbReference type="SUPFAM" id="SSF52540">
    <property type="entry name" value="P-loop containing nucleoside triphosphate hydrolases"/>
    <property type="match status" value="1"/>
</dbReference>
<dbReference type="PROSITE" id="PS51710">
    <property type="entry name" value="G_OBG"/>
    <property type="match status" value="1"/>
</dbReference>
<dbReference type="PROSITE" id="PS00905">
    <property type="entry name" value="GTP1_OBG"/>
    <property type="match status" value="1"/>
</dbReference>
<dbReference type="PROSITE" id="PS51883">
    <property type="entry name" value="OBG"/>
    <property type="match status" value="1"/>
</dbReference>
<comment type="function">
    <text evidence="1">An essential GTPase which binds GTP, GDP and possibly (p)ppGpp with moderate affinity, with high nucleotide exchange rates and a fairly low GTP hydrolysis rate. Plays a role in control of the cell cycle, stress response, ribosome biogenesis and in those bacteria that undergo differentiation, in morphogenesis control.</text>
</comment>
<comment type="cofactor">
    <cofactor evidence="1">
        <name>Mg(2+)</name>
        <dbReference type="ChEBI" id="CHEBI:18420"/>
    </cofactor>
</comment>
<comment type="subunit">
    <text evidence="1">Monomer.</text>
</comment>
<comment type="subcellular location">
    <subcellularLocation>
        <location evidence="1">Cytoplasm</location>
    </subcellularLocation>
</comment>
<comment type="similarity">
    <text evidence="1">Belongs to the TRAFAC class OBG-HflX-like GTPase superfamily. OBG GTPase family.</text>
</comment>
<protein>
    <recommendedName>
        <fullName evidence="1">GTPase Obg</fullName>
        <ecNumber evidence="1">3.6.5.-</ecNumber>
    </recommendedName>
    <alternativeName>
        <fullName evidence="1">GTP-binding protein Obg</fullName>
    </alternativeName>
</protein>
<sequence length="344" mass="36569">MKFLDEAKVYVRSGDGGPGCVSFRREKFIEFGGPNGGDGGRGGDVWIECVQGLNTLIDYRYRQHFKARKGEHGMGSNCHGAKGDDAVLQVPAGTQVFAEDGETLIADMTEVGQRVRLAKGGNGGFGNAYFTTSTNRAPRHANPGQEGQEMWLILRLKLIADAGLVGLPNAGKSTFLATVTAAKPKIADYPFTTLHPGLGVVRSDAREFVLADIPGLIEGAHEGVGLGDRFLAHVERCRVLLHLVEGTSEHAGKAYKLVRRELEAYGGGLADKPEIVALSKADALDPDTLKNQVARLKRAAGGKPLVLSAASGQGVQEALRAIQAQLDGEDAADETAEPAEPWHP</sequence>
<evidence type="ECO:0000255" key="1">
    <source>
        <dbReference type="HAMAP-Rule" id="MF_01454"/>
    </source>
</evidence>
<evidence type="ECO:0000255" key="2">
    <source>
        <dbReference type="PROSITE-ProRule" id="PRU01231"/>
    </source>
</evidence>
<name>OBG_METPB</name>
<organism>
    <name type="scientific">Methylorubrum populi (strain ATCC BAA-705 / NCIMB 13946 / BJ001)</name>
    <name type="common">Methylobacterium populi</name>
    <dbReference type="NCBI Taxonomy" id="441620"/>
    <lineage>
        <taxon>Bacteria</taxon>
        <taxon>Pseudomonadati</taxon>
        <taxon>Pseudomonadota</taxon>
        <taxon>Alphaproteobacteria</taxon>
        <taxon>Hyphomicrobiales</taxon>
        <taxon>Methylobacteriaceae</taxon>
        <taxon>Methylorubrum</taxon>
    </lineage>
</organism>
<keyword id="KW-0963">Cytoplasm</keyword>
<keyword id="KW-0342">GTP-binding</keyword>
<keyword id="KW-0378">Hydrolase</keyword>
<keyword id="KW-0460">Magnesium</keyword>
<keyword id="KW-0479">Metal-binding</keyword>
<keyword id="KW-0547">Nucleotide-binding</keyword>
<accession>B1ZL15</accession>